<comment type="function">
    <text evidence="1">Probably involved in the control of the structural glucose backbone of osmoregulated periplasmic glucans (OPGs).</text>
</comment>
<comment type="pathway">
    <text>Glycan metabolism; osmoregulated periplasmic glucan (OPG) biosynthesis.</text>
</comment>
<comment type="subcellular location">
    <subcellularLocation>
        <location evidence="1">Periplasm</location>
    </subcellularLocation>
</comment>
<comment type="PTM">
    <text>Predicted to be exported by the Tat system. The position of the signal peptide cleavage has not been experimentally proven.</text>
</comment>
<comment type="similarity">
    <text evidence="3">Belongs to the OpgD/OpgG family.</text>
</comment>
<keyword id="KW-0574">Periplasm</keyword>
<keyword id="KW-0732">Signal</keyword>
<accession>Q8PEQ6</accession>
<organism>
    <name type="scientific">Xanthomonas axonopodis pv. citri (strain 306)</name>
    <dbReference type="NCBI Taxonomy" id="190486"/>
    <lineage>
        <taxon>Bacteria</taxon>
        <taxon>Pseudomonadati</taxon>
        <taxon>Pseudomonadota</taxon>
        <taxon>Gammaproteobacteria</taxon>
        <taxon>Lysobacterales</taxon>
        <taxon>Lysobacteraceae</taxon>
        <taxon>Xanthomonas</taxon>
    </lineage>
</organism>
<dbReference type="EMBL" id="AE008923">
    <property type="protein sequence ID" value="AAM39119.1"/>
    <property type="molecule type" value="Genomic_DNA"/>
</dbReference>
<dbReference type="RefSeq" id="WP_011052870.1">
    <property type="nucleotide sequence ID" value="NC_003919.1"/>
</dbReference>
<dbReference type="SMR" id="Q8PEQ6"/>
<dbReference type="KEGG" id="xac:XAC4284"/>
<dbReference type="eggNOG" id="COG3131">
    <property type="taxonomic scope" value="Bacteria"/>
</dbReference>
<dbReference type="HOGENOM" id="CLU_023403_2_0_6"/>
<dbReference type="UniPathway" id="UPA00637"/>
<dbReference type="Proteomes" id="UP000000576">
    <property type="component" value="Chromosome"/>
</dbReference>
<dbReference type="GO" id="GO:0030288">
    <property type="term" value="C:outer membrane-bounded periplasmic space"/>
    <property type="evidence" value="ECO:0007669"/>
    <property type="project" value="TreeGrafter"/>
</dbReference>
<dbReference type="GO" id="GO:0030246">
    <property type="term" value="F:carbohydrate binding"/>
    <property type="evidence" value="ECO:0007669"/>
    <property type="project" value="InterPro"/>
</dbReference>
<dbReference type="GO" id="GO:0003824">
    <property type="term" value="F:catalytic activity"/>
    <property type="evidence" value="ECO:0007669"/>
    <property type="project" value="InterPro"/>
</dbReference>
<dbReference type="GO" id="GO:0051274">
    <property type="term" value="P:beta-glucan biosynthetic process"/>
    <property type="evidence" value="ECO:0007669"/>
    <property type="project" value="TreeGrafter"/>
</dbReference>
<dbReference type="FunFam" id="2.60.40.10:FF:002063">
    <property type="entry name" value="Glucans biosynthesis protein D"/>
    <property type="match status" value="1"/>
</dbReference>
<dbReference type="FunFam" id="2.70.98.10:FF:000001">
    <property type="entry name" value="Glucans biosynthesis protein G"/>
    <property type="match status" value="1"/>
</dbReference>
<dbReference type="Gene3D" id="2.70.98.10">
    <property type="match status" value="1"/>
</dbReference>
<dbReference type="Gene3D" id="2.60.40.10">
    <property type="entry name" value="Immunoglobulins"/>
    <property type="match status" value="1"/>
</dbReference>
<dbReference type="HAMAP" id="MF_01068">
    <property type="entry name" value="MdoD_OpgD"/>
    <property type="match status" value="1"/>
</dbReference>
<dbReference type="InterPro" id="IPR011013">
    <property type="entry name" value="Gal_mutarotase_sf_dom"/>
</dbReference>
<dbReference type="InterPro" id="IPR014718">
    <property type="entry name" value="GH-type_carb-bd"/>
</dbReference>
<dbReference type="InterPro" id="IPR023724">
    <property type="entry name" value="Glucan_biosyn_MdoD"/>
</dbReference>
<dbReference type="InterPro" id="IPR014438">
    <property type="entry name" value="Glucan_biosyn_MdoG/MdoD"/>
</dbReference>
<dbReference type="InterPro" id="IPR007444">
    <property type="entry name" value="Glucan_biosyn_MdoG_C"/>
</dbReference>
<dbReference type="InterPro" id="IPR013783">
    <property type="entry name" value="Ig-like_fold"/>
</dbReference>
<dbReference type="InterPro" id="IPR014756">
    <property type="entry name" value="Ig_E-set"/>
</dbReference>
<dbReference type="InterPro" id="IPR006311">
    <property type="entry name" value="TAT_signal"/>
</dbReference>
<dbReference type="PANTHER" id="PTHR30504">
    <property type="entry name" value="GLUCANS BIOSYNTHESIS PROTEIN"/>
    <property type="match status" value="1"/>
</dbReference>
<dbReference type="PANTHER" id="PTHR30504:SF3">
    <property type="entry name" value="GLUCANS BIOSYNTHESIS PROTEIN D"/>
    <property type="match status" value="1"/>
</dbReference>
<dbReference type="Pfam" id="PF04349">
    <property type="entry name" value="MdoG"/>
    <property type="match status" value="1"/>
</dbReference>
<dbReference type="PIRSF" id="PIRSF006281">
    <property type="entry name" value="MdoG"/>
    <property type="match status" value="1"/>
</dbReference>
<dbReference type="SUPFAM" id="SSF81296">
    <property type="entry name" value="E set domains"/>
    <property type="match status" value="1"/>
</dbReference>
<dbReference type="SUPFAM" id="SSF74650">
    <property type="entry name" value="Galactose mutarotase-like"/>
    <property type="match status" value="1"/>
</dbReference>
<dbReference type="PROSITE" id="PS51318">
    <property type="entry name" value="TAT"/>
    <property type="match status" value="1"/>
</dbReference>
<sequence>MQRRHFLKNAAAALAALGLPTLPQWALAAKAVGLRRLGQPQPFDYAWLKGQARELANAPYKSHKQLLPGPLEALNWDQYQSIRYRQDHALWADGNGKFQAKFFHLGLYFHTPVHIYDIVDGKAQQLAYDPAAFDYGRSGLGGKQLPKDLGFAGFRLNTRKDTDRDFSAFLGASYFRAVGKEGQYGQSARGLAIDTGTGGPEEFPDFIAYYLEQPADDSDTVVVYGLLDSPSVAGAYRFAITNGDVLLMDIDSALYPRKAIERLGIGPCTSMYQVGENDNRMDWDWRPEIHDTDGLAMWTGGGEWIWRPLCNPPHLRFNMFVDENPRGFGLLQRDRNFDHYQDDGVFYEKRPCLWVEPKSGWGKGSVQLVEIPTVDETFDNIVAFWNPQAKPQPGQELLMGYRLYWGAQPPASSPLAHCVATRTGLGGIVGQKRSHFSWRFAVDFAGGELAALAKDPKAKVEAVLQVSRGTTEIVSARPLHELKGYRAMFDLVPPDEGTQQIDIRLYLRANGKPLTETWLYQWTPPPPSERRIY</sequence>
<name>OPGD_XANAC</name>
<feature type="signal peptide" description="Tat-type signal" evidence="2">
    <location>
        <begin position="1"/>
        <end position="28"/>
    </location>
</feature>
<feature type="chain" id="PRO_0000020216" description="Glucans biosynthesis protein D">
    <location>
        <begin position="29"/>
        <end position="533"/>
    </location>
</feature>
<evidence type="ECO:0000250" key="1"/>
<evidence type="ECO:0000255" key="2"/>
<evidence type="ECO:0000305" key="3"/>
<protein>
    <recommendedName>
        <fullName>Glucans biosynthesis protein D</fullName>
    </recommendedName>
</protein>
<proteinExistence type="inferred from homology"/>
<gene>
    <name type="primary">opgD</name>
    <name type="ordered locus">XAC4284</name>
</gene>
<reference key="1">
    <citation type="journal article" date="2002" name="Nature">
        <title>Comparison of the genomes of two Xanthomonas pathogens with differing host specificities.</title>
        <authorList>
            <person name="da Silva A.C.R."/>
            <person name="Ferro J.A."/>
            <person name="Reinach F.C."/>
            <person name="Farah C.S."/>
            <person name="Furlan L.R."/>
            <person name="Quaggio R.B."/>
            <person name="Monteiro-Vitorello C.B."/>
            <person name="Van Sluys M.A."/>
            <person name="Almeida N.F. Jr."/>
            <person name="Alves L.M.C."/>
            <person name="do Amaral A.M."/>
            <person name="Bertolini M.C."/>
            <person name="Camargo L.E.A."/>
            <person name="Camarotte G."/>
            <person name="Cannavan F."/>
            <person name="Cardozo J."/>
            <person name="Chambergo F."/>
            <person name="Ciapina L.P."/>
            <person name="Cicarelli R.M.B."/>
            <person name="Coutinho L.L."/>
            <person name="Cursino-Santos J.R."/>
            <person name="El-Dorry H."/>
            <person name="Faria J.B."/>
            <person name="Ferreira A.J.S."/>
            <person name="Ferreira R.C.C."/>
            <person name="Ferro M.I.T."/>
            <person name="Formighieri E.F."/>
            <person name="Franco M.C."/>
            <person name="Greggio C.C."/>
            <person name="Gruber A."/>
            <person name="Katsuyama A.M."/>
            <person name="Kishi L.T."/>
            <person name="Leite R.P."/>
            <person name="Lemos E.G.M."/>
            <person name="Lemos M.V.F."/>
            <person name="Locali E.C."/>
            <person name="Machado M.A."/>
            <person name="Madeira A.M.B.N."/>
            <person name="Martinez-Rossi N.M."/>
            <person name="Martins E.C."/>
            <person name="Meidanis J."/>
            <person name="Menck C.F.M."/>
            <person name="Miyaki C.Y."/>
            <person name="Moon D.H."/>
            <person name="Moreira L.M."/>
            <person name="Novo M.T.M."/>
            <person name="Okura V.K."/>
            <person name="Oliveira M.C."/>
            <person name="Oliveira V.R."/>
            <person name="Pereira H.A."/>
            <person name="Rossi A."/>
            <person name="Sena J.A.D."/>
            <person name="Silva C."/>
            <person name="de Souza R.F."/>
            <person name="Spinola L.A.F."/>
            <person name="Takita M.A."/>
            <person name="Tamura R.E."/>
            <person name="Teixeira E.C."/>
            <person name="Tezza R.I.D."/>
            <person name="Trindade dos Santos M."/>
            <person name="Truffi D."/>
            <person name="Tsai S.M."/>
            <person name="White F.F."/>
            <person name="Setubal J.C."/>
            <person name="Kitajima J.P."/>
        </authorList>
    </citation>
    <scope>NUCLEOTIDE SEQUENCE [LARGE SCALE GENOMIC DNA]</scope>
    <source>
        <strain>306</strain>
    </source>
</reference>